<feature type="chain" id="PRO_0000179056" description="GTPase Der">
    <location>
        <begin position="1"/>
        <end position="436"/>
    </location>
</feature>
<feature type="domain" description="EngA-type G 1">
    <location>
        <begin position="4"/>
        <end position="167"/>
    </location>
</feature>
<feature type="domain" description="EngA-type G 2">
    <location>
        <begin position="175"/>
        <end position="351"/>
    </location>
</feature>
<feature type="domain" description="KH-like">
    <location>
        <begin position="352"/>
        <end position="436"/>
    </location>
</feature>
<feature type="binding site" evidence="2">
    <location>
        <begin position="10"/>
        <end position="17"/>
    </location>
    <ligand>
        <name>GTP</name>
        <dbReference type="ChEBI" id="CHEBI:37565"/>
        <label>1</label>
    </ligand>
</feature>
<feature type="binding site" evidence="2">
    <location>
        <begin position="57"/>
        <end position="61"/>
    </location>
    <ligand>
        <name>GTP</name>
        <dbReference type="ChEBI" id="CHEBI:37565"/>
        <label>1</label>
    </ligand>
</feature>
<feature type="binding site" evidence="2">
    <location>
        <begin position="119"/>
        <end position="122"/>
    </location>
    <ligand>
        <name>GTP</name>
        <dbReference type="ChEBI" id="CHEBI:37565"/>
        <label>1</label>
    </ligand>
</feature>
<feature type="binding site" evidence="2">
    <location>
        <begin position="181"/>
        <end position="188"/>
    </location>
    <ligand>
        <name>GTP</name>
        <dbReference type="ChEBI" id="CHEBI:37565"/>
        <label>2</label>
    </ligand>
</feature>
<feature type="binding site" evidence="2">
    <location>
        <begin position="229"/>
        <end position="233"/>
    </location>
    <ligand>
        <name>GTP</name>
        <dbReference type="ChEBI" id="CHEBI:37565"/>
        <label>2</label>
    </ligand>
</feature>
<feature type="binding site" evidence="2">
    <location>
        <begin position="294"/>
        <end position="297"/>
    </location>
    <ligand>
        <name>GTP</name>
        <dbReference type="ChEBI" id="CHEBI:37565"/>
        <label>2</label>
    </ligand>
</feature>
<organism>
    <name type="scientific">Streptococcus pneumoniae (strain ATCC BAA-255 / R6)</name>
    <dbReference type="NCBI Taxonomy" id="171101"/>
    <lineage>
        <taxon>Bacteria</taxon>
        <taxon>Bacillati</taxon>
        <taxon>Bacillota</taxon>
        <taxon>Bacilli</taxon>
        <taxon>Lactobacillales</taxon>
        <taxon>Streptococcaceae</taxon>
        <taxon>Streptococcus</taxon>
    </lineage>
</organism>
<protein>
    <recommendedName>
        <fullName>GTPase Der</fullName>
    </recommendedName>
    <alternativeName>
        <fullName>GTP-binding protein EngA</fullName>
    </alternativeName>
</protein>
<reference key="1">
    <citation type="journal article" date="2001" name="J. Bacteriol.">
        <title>Genome of the bacterium Streptococcus pneumoniae strain R6.</title>
        <authorList>
            <person name="Hoskins J."/>
            <person name="Alborn W.E. Jr."/>
            <person name="Arnold J."/>
            <person name="Blaszczak L.C."/>
            <person name="Burgett S."/>
            <person name="DeHoff B.S."/>
            <person name="Estrem S.T."/>
            <person name="Fritz L."/>
            <person name="Fu D.-J."/>
            <person name="Fuller W."/>
            <person name="Geringer C."/>
            <person name="Gilmour R."/>
            <person name="Glass J.S."/>
            <person name="Khoja H."/>
            <person name="Kraft A.R."/>
            <person name="Lagace R.E."/>
            <person name="LeBlanc D.J."/>
            <person name="Lee L.N."/>
            <person name="Lefkowitz E.J."/>
            <person name="Lu J."/>
            <person name="Matsushima P."/>
            <person name="McAhren S.M."/>
            <person name="McHenney M."/>
            <person name="McLeaster K."/>
            <person name="Mundy C.W."/>
            <person name="Nicas T.I."/>
            <person name="Norris F.H."/>
            <person name="O'Gara M."/>
            <person name="Peery R.B."/>
            <person name="Robertson G.T."/>
            <person name="Rockey P."/>
            <person name="Sun P.-M."/>
            <person name="Winkler M.E."/>
            <person name="Yang Y."/>
            <person name="Young-Bellido M."/>
            <person name="Zhao G."/>
            <person name="Zook C.A."/>
            <person name="Baltz R.H."/>
            <person name="Jaskunas S.R."/>
            <person name="Rosteck P.R. Jr."/>
            <person name="Skatrud P.L."/>
            <person name="Glass J.I."/>
        </authorList>
    </citation>
    <scope>NUCLEOTIDE SEQUENCE [LARGE SCALE GENOMIC DNA]</scope>
    <source>
        <strain>ATCC BAA-255 / R6</strain>
    </source>
</reference>
<reference key="2">
    <citation type="journal article" date="2003" name="J. Mol. Microbiol. Biotechnol.">
        <title>A global approach to identify novel broad-spectrum antibacterial targets among proteins of unknown function.</title>
        <authorList>
            <person name="Zalacain M."/>
            <person name="Biswas S."/>
            <person name="Ingraham K.A."/>
            <person name="Ambrad J."/>
            <person name="Bryant A."/>
            <person name="Chalker A.F."/>
            <person name="Iordanescu S."/>
            <person name="Fan J."/>
            <person name="Fan F."/>
            <person name="Lunsford R.D."/>
            <person name="O'Dwyer K."/>
            <person name="Palmer L.M."/>
            <person name="So C."/>
            <person name="Sylvester D."/>
            <person name="Volker C."/>
            <person name="Warren P."/>
            <person name="McDevitt D."/>
            <person name="Brown J.R."/>
            <person name="Holmes D.J."/>
            <person name="Burnham M.K."/>
        </authorList>
    </citation>
    <scope>DISRUPTION PHENOTYPE</scope>
</reference>
<gene>
    <name type="primary">der</name>
    <name type="synonym">engA</name>
    <name type="synonym">serA</name>
    <name type="ordered locus">spr1553</name>
</gene>
<name>DER_STRR6</name>
<dbReference type="EMBL" id="AE007317">
    <property type="protein sequence ID" value="AAL00357.1"/>
    <property type="molecule type" value="Genomic_DNA"/>
</dbReference>
<dbReference type="PIR" id="H98065">
    <property type="entry name" value="H98065"/>
</dbReference>
<dbReference type="RefSeq" id="NP_359146.1">
    <property type="nucleotide sequence ID" value="NC_003098.1"/>
</dbReference>
<dbReference type="RefSeq" id="WP_001207696.1">
    <property type="nucleotide sequence ID" value="NC_003098.1"/>
</dbReference>
<dbReference type="SMR" id="P64063"/>
<dbReference type="STRING" id="171101.spr1553"/>
<dbReference type="GeneID" id="93740105"/>
<dbReference type="KEGG" id="spr:spr1553"/>
<dbReference type="PATRIC" id="fig|171101.6.peg.1677"/>
<dbReference type="eggNOG" id="COG1160">
    <property type="taxonomic scope" value="Bacteria"/>
</dbReference>
<dbReference type="HOGENOM" id="CLU_016077_6_2_9"/>
<dbReference type="Proteomes" id="UP000000586">
    <property type="component" value="Chromosome"/>
</dbReference>
<dbReference type="GO" id="GO:0005525">
    <property type="term" value="F:GTP binding"/>
    <property type="evidence" value="ECO:0007669"/>
    <property type="project" value="UniProtKB-UniRule"/>
</dbReference>
<dbReference type="GO" id="GO:0043022">
    <property type="term" value="F:ribosome binding"/>
    <property type="evidence" value="ECO:0000318"/>
    <property type="project" value="GO_Central"/>
</dbReference>
<dbReference type="GO" id="GO:0042254">
    <property type="term" value="P:ribosome biogenesis"/>
    <property type="evidence" value="ECO:0007669"/>
    <property type="project" value="UniProtKB-KW"/>
</dbReference>
<dbReference type="CDD" id="cd01894">
    <property type="entry name" value="EngA1"/>
    <property type="match status" value="1"/>
</dbReference>
<dbReference type="CDD" id="cd01895">
    <property type="entry name" value="EngA2"/>
    <property type="match status" value="1"/>
</dbReference>
<dbReference type="FunFam" id="3.30.300.20:FF:000004">
    <property type="entry name" value="GTPase Der"/>
    <property type="match status" value="1"/>
</dbReference>
<dbReference type="FunFam" id="3.40.50.300:FF:000040">
    <property type="entry name" value="GTPase Der"/>
    <property type="match status" value="1"/>
</dbReference>
<dbReference type="FunFam" id="3.40.50.300:FF:000057">
    <property type="entry name" value="GTPase Der"/>
    <property type="match status" value="1"/>
</dbReference>
<dbReference type="Gene3D" id="3.30.300.20">
    <property type="match status" value="1"/>
</dbReference>
<dbReference type="Gene3D" id="3.40.50.300">
    <property type="entry name" value="P-loop containing nucleotide triphosphate hydrolases"/>
    <property type="match status" value="2"/>
</dbReference>
<dbReference type="HAMAP" id="MF_00195">
    <property type="entry name" value="GTPase_Der"/>
    <property type="match status" value="1"/>
</dbReference>
<dbReference type="InterPro" id="IPR031166">
    <property type="entry name" value="G_ENGA"/>
</dbReference>
<dbReference type="InterPro" id="IPR006073">
    <property type="entry name" value="GTP-bd"/>
</dbReference>
<dbReference type="InterPro" id="IPR016484">
    <property type="entry name" value="GTPase_Der"/>
</dbReference>
<dbReference type="InterPro" id="IPR032859">
    <property type="entry name" value="KH_dom-like"/>
</dbReference>
<dbReference type="InterPro" id="IPR015946">
    <property type="entry name" value="KH_dom-like_a/b"/>
</dbReference>
<dbReference type="InterPro" id="IPR027417">
    <property type="entry name" value="P-loop_NTPase"/>
</dbReference>
<dbReference type="InterPro" id="IPR005225">
    <property type="entry name" value="Small_GTP-bd"/>
</dbReference>
<dbReference type="NCBIfam" id="TIGR03594">
    <property type="entry name" value="GTPase_EngA"/>
    <property type="match status" value="1"/>
</dbReference>
<dbReference type="NCBIfam" id="TIGR00231">
    <property type="entry name" value="small_GTP"/>
    <property type="match status" value="2"/>
</dbReference>
<dbReference type="PANTHER" id="PTHR43834">
    <property type="entry name" value="GTPASE DER"/>
    <property type="match status" value="1"/>
</dbReference>
<dbReference type="PANTHER" id="PTHR43834:SF6">
    <property type="entry name" value="GTPASE DER"/>
    <property type="match status" value="1"/>
</dbReference>
<dbReference type="Pfam" id="PF14714">
    <property type="entry name" value="KH_dom-like"/>
    <property type="match status" value="1"/>
</dbReference>
<dbReference type="Pfam" id="PF01926">
    <property type="entry name" value="MMR_HSR1"/>
    <property type="match status" value="2"/>
</dbReference>
<dbReference type="PIRSF" id="PIRSF006485">
    <property type="entry name" value="GTP-binding_EngA"/>
    <property type="match status" value="1"/>
</dbReference>
<dbReference type="PRINTS" id="PR00326">
    <property type="entry name" value="GTP1OBG"/>
</dbReference>
<dbReference type="SUPFAM" id="SSF52540">
    <property type="entry name" value="P-loop containing nucleoside triphosphate hydrolases"/>
    <property type="match status" value="2"/>
</dbReference>
<dbReference type="PROSITE" id="PS51712">
    <property type="entry name" value="G_ENGA"/>
    <property type="match status" value="2"/>
</dbReference>
<comment type="function">
    <text evidence="1">GTPase that plays an essential role in the late steps of ribosome biogenesis.</text>
</comment>
<comment type="subunit">
    <text evidence="1">Associates with the 50S ribosomal subunit.</text>
</comment>
<comment type="disruption phenotype">
    <text evidence="3">Essential for growth, it cannot be disrupted.</text>
</comment>
<comment type="similarity">
    <text evidence="4">Belongs to the TRAFAC class TrmE-Era-EngA-EngB-Septin-like GTPase superfamily. EngA (Der) GTPase family.</text>
</comment>
<proteinExistence type="inferred from homology"/>
<accession>P64063</accession>
<accession>Q97PC9</accession>
<evidence type="ECO:0000250" key="1"/>
<evidence type="ECO:0000255" key="2"/>
<evidence type="ECO:0000269" key="3">
    <source>
    </source>
</evidence>
<evidence type="ECO:0000305" key="4"/>
<sequence>MALPTIAIVGRPNVGKSTLFNRIAGERISIVEDVEGVTRDRIYATGEWLNRSFSMIDTGGIDDVDAPFMEQIKHQAEIAMEEADVIVFVVSGKEGITDADEYVARKLYKTHKPVILAVNKVDNPEMRNDIYDFYALGLGEPLPISSVHGIGTGDVLDAIVENLPNEYEEENPDVIKFSLIGRPNVGKSSLINAILGEDRVIASPVAGTTRDAIDTHFTDTDGQEFTMIDTAGMRKSGKVYENTEKYSVMRAMRAIDRSDVVLMVINAEEGIREYDKRIAGFAHEAGKGMIIVVNKWDTLEKDNHTMKNWEEDIREQFQYLPYAPIIFVSALTKQRLHKLPEMIKQISESQNTRIPSAVLNDVIMDAIAINPTPTDKGKRLKIFYATQVATKPPTFVIFVNEEELMHFSYLRFLENQIRKAFVFEGTPIHLIARKRK</sequence>
<keyword id="KW-0342">GTP-binding</keyword>
<keyword id="KW-0547">Nucleotide-binding</keyword>
<keyword id="KW-1185">Reference proteome</keyword>
<keyword id="KW-0677">Repeat</keyword>
<keyword id="KW-0690">Ribosome biogenesis</keyword>